<comment type="function">
    <text evidence="1">Binds to the 23S rRNA.</text>
</comment>
<comment type="cofactor">
    <cofactor evidence="1">
        <name>Zn(2+)</name>
        <dbReference type="ChEBI" id="CHEBI:29105"/>
    </cofactor>
    <text evidence="1">Binds 1 zinc ion per subunit.</text>
</comment>
<comment type="similarity">
    <text evidence="4">Belongs to the eukaryotic ribosomal protein eL37 family.</text>
</comment>
<comment type="sequence caution" evidence="4">
    <conflict type="erroneous translation">
        <sequence resource="EMBL-CDS" id="CBF76782"/>
    </conflict>
    <text>Wrong choice of frame.</text>
</comment>
<comment type="sequence caution" evidence="4">
    <conflict type="erroneous gene model prediction">
        <sequence resource="EMBL-CDS" id="EAA60357"/>
    </conflict>
</comment>
<feature type="chain" id="PRO_0000139719" description="Large ribosomal subunit protein eL37">
    <location>
        <begin position="1"/>
        <end position="92"/>
    </location>
</feature>
<feature type="zinc finger region" description="C4-type" evidence="2">
    <location>
        <begin position="19"/>
        <end position="37"/>
    </location>
</feature>
<feature type="region of interest" description="Disordered" evidence="3">
    <location>
        <begin position="50"/>
        <end position="92"/>
    </location>
</feature>
<feature type="binding site" evidence="1">
    <location>
        <position position="19"/>
    </location>
    <ligand>
        <name>Zn(2+)</name>
        <dbReference type="ChEBI" id="CHEBI:29105"/>
    </ligand>
</feature>
<feature type="binding site" evidence="1">
    <location>
        <position position="22"/>
    </location>
    <ligand>
        <name>Zn(2+)</name>
        <dbReference type="ChEBI" id="CHEBI:29105"/>
    </ligand>
</feature>
<feature type="binding site" evidence="1">
    <location>
        <position position="34"/>
    </location>
    <ligand>
        <name>Zn(2+)</name>
        <dbReference type="ChEBI" id="CHEBI:29105"/>
    </ligand>
</feature>
<feature type="binding site" evidence="1">
    <location>
        <position position="37"/>
    </location>
    <ligand>
        <name>Zn(2+)</name>
        <dbReference type="ChEBI" id="CHEBI:29105"/>
    </ligand>
</feature>
<name>RL37_EMENI</name>
<organism>
    <name type="scientific">Emericella nidulans (strain FGSC A4 / ATCC 38163 / CBS 112.46 / NRRL 194 / M139)</name>
    <name type="common">Aspergillus nidulans</name>
    <dbReference type="NCBI Taxonomy" id="227321"/>
    <lineage>
        <taxon>Eukaryota</taxon>
        <taxon>Fungi</taxon>
        <taxon>Dikarya</taxon>
        <taxon>Ascomycota</taxon>
        <taxon>Pezizomycotina</taxon>
        <taxon>Eurotiomycetes</taxon>
        <taxon>Eurotiomycetidae</taxon>
        <taxon>Eurotiales</taxon>
        <taxon>Aspergillaceae</taxon>
        <taxon>Aspergillus</taxon>
        <taxon>Aspergillus subgen. Nidulantes</taxon>
    </lineage>
</organism>
<keyword id="KW-0479">Metal-binding</keyword>
<keyword id="KW-1185">Reference proteome</keyword>
<keyword id="KW-0687">Ribonucleoprotein</keyword>
<keyword id="KW-0689">Ribosomal protein</keyword>
<keyword id="KW-0694">RNA-binding</keyword>
<keyword id="KW-0699">rRNA-binding</keyword>
<keyword id="KW-0862">Zinc</keyword>
<keyword id="KW-0863">Zinc-finger</keyword>
<dbReference type="EMBL" id="AF277381">
    <property type="protein sequence ID" value="AAK17096.1"/>
    <property type="molecule type" value="Genomic_DNA"/>
</dbReference>
<dbReference type="EMBL" id="AF277382">
    <property type="protein sequence ID" value="AAK17097.1"/>
    <property type="molecule type" value="mRNA"/>
</dbReference>
<dbReference type="EMBL" id="AACD01000081">
    <property type="protein sequence ID" value="EAA60357.1"/>
    <property type="status" value="ALT_SEQ"/>
    <property type="molecule type" value="Genomic_DNA"/>
</dbReference>
<dbReference type="EMBL" id="BN001303">
    <property type="protein sequence ID" value="CBF76782.1"/>
    <property type="status" value="ALT_SEQ"/>
    <property type="molecule type" value="Genomic_DNA"/>
</dbReference>
<dbReference type="RefSeq" id="XP_662391.1">
    <property type="nucleotide sequence ID" value="XM_657299.1"/>
</dbReference>
<dbReference type="SMR" id="Q9C0T1"/>
<dbReference type="FunCoup" id="Q9C0T1">
    <property type="interactions" value="537"/>
</dbReference>
<dbReference type="STRING" id="227321.Q9C0T1"/>
<dbReference type="KEGG" id="ani:ANIA_04787"/>
<dbReference type="HOGENOM" id="CLU_150908_2_1_1"/>
<dbReference type="InParanoid" id="Q9C0T1"/>
<dbReference type="Proteomes" id="UP000000560">
    <property type="component" value="Chromosome III"/>
</dbReference>
<dbReference type="GO" id="GO:0022625">
    <property type="term" value="C:cytosolic large ribosomal subunit"/>
    <property type="evidence" value="ECO:0000318"/>
    <property type="project" value="GO_Central"/>
</dbReference>
<dbReference type="GO" id="GO:0003723">
    <property type="term" value="F:RNA binding"/>
    <property type="evidence" value="ECO:0000318"/>
    <property type="project" value="GO_Central"/>
</dbReference>
<dbReference type="GO" id="GO:0019843">
    <property type="term" value="F:rRNA binding"/>
    <property type="evidence" value="ECO:0007669"/>
    <property type="project" value="UniProtKB-KW"/>
</dbReference>
<dbReference type="GO" id="GO:0003735">
    <property type="term" value="F:structural constituent of ribosome"/>
    <property type="evidence" value="ECO:0007669"/>
    <property type="project" value="InterPro"/>
</dbReference>
<dbReference type="GO" id="GO:0008270">
    <property type="term" value="F:zinc ion binding"/>
    <property type="evidence" value="ECO:0007669"/>
    <property type="project" value="UniProtKB-KW"/>
</dbReference>
<dbReference type="GO" id="GO:0006412">
    <property type="term" value="P:translation"/>
    <property type="evidence" value="ECO:0007669"/>
    <property type="project" value="InterPro"/>
</dbReference>
<dbReference type="FunFam" id="2.20.25.30:FF:000001">
    <property type="entry name" value="Ribosomal protein L37"/>
    <property type="match status" value="1"/>
</dbReference>
<dbReference type="Gene3D" id="2.20.25.30">
    <property type="match status" value="1"/>
</dbReference>
<dbReference type="HAMAP" id="MF_00547">
    <property type="entry name" value="Ribosomal_eL37"/>
    <property type="match status" value="1"/>
</dbReference>
<dbReference type="InterPro" id="IPR001569">
    <property type="entry name" value="Ribosomal_eL37"/>
</dbReference>
<dbReference type="InterPro" id="IPR011331">
    <property type="entry name" value="Ribosomal_eL37/eL43"/>
</dbReference>
<dbReference type="InterPro" id="IPR018267">
    <property type="entry name" value="Ribosomal_eL37_CS"/>
</dbReference>
<dbReference type="InterPro" id="IPR011332">
    <property type="entry name" value="Ribosomal_zn-bd"/>
</dbReference>
<dbReference type="NCBIfam" id="NF003214">
    <property type="entry name" value="PRK04179.1"/>
    <property type="match status" value="1"/>
</dbReference>
<dbReference type="PANTHER" id="PTHR10768">
    <property type="entry name" value="60S RIBOSOMAL PROTEIN L37"/>
    <property type="match status" value="1"/>
</dbReference>
<dbReference type="PANTHER" id="PTHR10768:SF0">
    <property type="entry name" value="RIBOSOMAL PROTEIN L37"/>
    <property type="match status" value="1"/>
</dbReference>
<dbReference type="Pfam" id="PF01907">
    <property type="entry name" value="Ribosomal_L37e"/>
    <property type="match status" value="1"/>
</dbReference>
<dbReference type="SUPFAM" id="SSF57829">
    <property type="entry name" value="Zn-binding ribosomal proteins"/>
    <property type="match status" value="1"/>
</dbReference>
<dbReference type="PROSITE" id="PS01077">
    <property type="entry name" value="RIBOSOMAL_L37E"/>
    <property type="match status" value="1"/>
</dbReference>
<accession>Q9C0T1</accession>
<accession>C8VAN1</accession>
<accession>Q5B3U3</accession>
<proteinExistence type="inferred from homology"/>
<gene>
    <name type="primary">rpl37</name>
    <name type="ORF">AN4787</name>
</gene>
<reference key="1">
    <citation type="journal article" date="2001" name="Gene">
        <title>Differential expression of house-keeping genes of Aspergillus nidulans during sexual development.</title>
        <authorList>
            <person name="Jeong H."/>
            <person name="Cho G."/>
            <person name="Han K."/>
            <person name="Kim J."/>
            <person name="Min Han D."/>
            <person name="Jahng K."/>
            <person name="Chae K."/>
        </authorList>
    </citation>
    <scope>NUCLEOTIDE SEQUENCE [GENOMIC DNA / MRNA]</scope>
</reference>
<reference key="2">
    <citation type="journal article" date="2005" name="Nature">
        <title>Sequencing of Aspergillus nidulans and comparative analysis with A. fumigatus and A. oryzae.</title>
        <authorList>
            <person name="Galagan J.E."/>
            <person name="Calvo S.E."/>
            <person name="Cuomo C."/>
            <person name="Ma L.-J."/>
            <person name="Wortman J.R."/>
            <person name="Batzoglou S."/>
            <person name="Lee S.-I."/>
            <person name="Bastuerkmen M."/>
            <person name="Spevak C.C."/>
            <person name="Clutterbuck J."/>
            <person name="Kapitonov V."/>
            <person name="Jurka J."/>
            <person name="Scazzocchio C."/>
            <person name="Farman M.L."/>
            <person name="Butler J."/>
            <person name="Purcell S."/>
            <person name="Harris S."/>
            <person name="Braus G.H."/>
            <person name="Draht O."/>
            <person name="Busch S."/>
            <person name="D'Enfert C."/>
            <person name="Bouchier C."/>
            <person name="Goldman G.H."/>
            <person name="Bell-Pedersen D."/>
            <person name="Griffiths-Jones S."/>
            <person name="Doonan J.H."/>
            <person name="Yu J."/>
            <person name="Vienken K."/>
            <person name="Pain A."/>
            <person name="Freitag M."/>
            <person name="Selker E.U."/>
            <person name="Archer D.B."/>
            <person name="Penalva M.A."/>
            <person name="Oakley B.R."/>
            <person name="Momany M."/>
            <person name="Tanaka T."/>
            <person name="Kumagai T."/>
            <person name="Asai K."/>
            <person name="Machida M."/>
            <person name="Nierman W.C."/>
            <person name="Denning D.W."/>
            <person name="Caddick M.X."/>
            <person name="Hynes M."/>
            <person name="Paoletti M."/>
            <person name="Fischer R."/>
            <person name="Miller B.L."/>
            <person name="Dyer P.S."/>
            <person name="Sachs M.S."/>
            <person name="Osmani S.A."/>
            <person name="Birren B.W."/>
        </authorList>
    </citation>
    <scope>NUCLEOTIDE SEQUENCE [LARGE SCALE GENOMIC DNA]</scope>
    <source>
        <strain>FGSC A4 / ATCC 38163 / CBS 112.46 / NRRL 194 / M139</strain>
    </source>
</reference>
<reference key="3">
    <citation type="journal article" date="2009" name="Fungal Genet. Biol.">
        <title>The 2008 update of the Aspergillus nidulans genome annotation: a community effort.</title>
        <authorList>
            <person name="Wortman J.R."/>
            <person name="Gilsenan J.M."/>
            <person name="Joardar V."/>
            <person name="Deegan J."/>
            <person name="Clutterbuck J."/>
            <person name="Andersen M.R."/>
            <person name="Archer D."/>
            <person name="Bencina M."/>
            <person name="Braus G."/>
            <person name="Coutinho P."/>
            <person name="von Dohren H."/>
            <person name="Doonan J."/>
            <person name="Driessen A.J."/>
            <person name="Durek P."/>
            <person name="Espeso E."/>
            <person name="Fekete E."/>
            <person name="Flipphi M."/>
            <person name="Estrada C.G."/>
            <person name="Geysens S."/>
            <person name="Goldman G."/>
            <person name="de Groot P.W."/>
            <person name="Hansen K."/>
            <person name="Harris S.D."/>
            <person name="Heinekamp T."/>
            <person name="Helmstaedt K."/>
            <person name="Henrissat B."/>
            <person name="Hofmann G."/>
            <person name="Homan T."/>
            <person name="Horio T."/>
            <person name="Horiuchi H."/>
            <person name="James S."/>
            <person name="Jones M."/>
            <person name="Karaffa L."/>
            <person name="Karanyi Z."/>
            <person name="Kato M."/>
            <person name="Keller N."/>
            <person name="Kelly D.E."/>
            <person name="Kiel J.A."/>
            <person name="Kim J.M."/>
            <person name="van der Klei I.J."/>
            <person name="Klis F.M."/>
            <person name="Kovalchuk A."/>
            <person name="Krasevec N."/>
            <person name="Kubicek C.P."/>
            <person name="Liu B."/>
            <person name="Maccabe A."/>
            <person name="Meyer V."/>
            <person name="Mirabito P."/>
            <person name="Miskei M."/>
            <person name="Mos M."/>
            <person name="Mullins J."/>
            <person name="Nelson D.R."/>
            <person name="Nielsen J."/>
            <person name="Oakley B.R."/>
            <person name="Osmani S.A."/>
            <person name="Pakula T."/>
            <person name="Paszewski A."/>
            <person name="Paulsen I."/>
            <person name="Pilsyk S."/>
            <person name="Pocsi I."/>
            <person name="Punt P.J."/>
            <person name="Ram A.F."/>
            <person name="Ren Q."/>
            <person name="Robellet X."/>
            <person name="Robson G."/>
            <person name="Seiboth B."/>
            <person name="van Solingen P."/>
            <person name="Specht T."/>
            <person name="Sun J."/>
            <person name="Taheri-Talesh N."/>
            <person name="Takeshita N."/>
            <person name="Ussery D."/>
            <person name="vanKuyk P.A."/>
            <person name="Visser H."/>
            <person name="van de Vondervoort P.J."/>
            <person name="de Vries R.P."/>
            <person name="Walton J."/>
            <person name="Xiang X."/>
            <person name="Xiong Y."/>
            <person name="Zeng A.P."/>
            <person name="Brandt B.W."/>
            <person name="Cornell M.J."/>
            <person name="van den Hondel C.A."/>
            <person name="Visser J."/>
            <person name="Oliver S.G."/>
            <person name="Turner G."/>
        </authorList>
    </citation>
    <scope>GENOME REANNOTATION</scope>
    <source>
        <strain>FGSC A4 / ATCC 38163 / CBS 112.46 / NRRL 194 / M139</strain>
    </source>
</reference>
<sequence length="92" mass="10502">MTKGTSSFGKRHNKTHTLCRRCGRRSYHIQKSTCANCGYPAAKTRKYNWSEKAKRRKTTGSGRTAHLRDVHRRFKNGFQVGTPKGARGPENH</sequence>
<evidence type="ECO:0000250" key="1"/>
<evidence type="ECO:0000255" key="2"/>
<evidence type="ECO:0000256" key="3">
    <source>
        <dbReference type="SAM" id="MobiDB-lite"/>
    </source>
</evidence>
<evidence type="ECO:0000305" key="4"/>
<protein>
    <recommendedName>
        <fullName evidence="4">Large ribosomal subunit protein eL37</fullName>
    </recommendedName>
    <alternativeName>
        <fullName>60S ribosomal protein L37</fullName>
    </alternativeName>
</protein>